<accession>B3R6R0</accession>
<proteinExistence type="inferred from homology"/>
<name>PROA_CUPTR</name>
<gene>
    <name evidence="1" type="primary">proA</name>
    <name type="ordered locus">RALTA_A2612</name>
</gene>
<sequence length="426" mass="45685">MTEFDLNQYMDRVGRQARAASRAIARASTADKNRALLTIAAAIRRDADQLKAVNARDVERARANGQDAAFVDRLTLSDKAIATMAAGLEQIAALPDPIGEISNMKFRPTGIQVGQMRVPLGVIGIIYESRPNVTIDAAALCLKSGNATILRGGSEAIESNTALAALVAEGLSAAGLPPEAVQVIETTDRAAVGRLITMTEFVDVIVPRGGKSLIARLMEEARVPMIKHLDGICHVYIDAEADLDKAVRVCDNAKTQRYAPCNTMETLLVSQDIAAAALPPLCRIYQQKGVELRVCPATRATLEAAGFSGLVDASEEDWRLEYLAPILAIKTVVGLDQAISHINEYGSHHTDSIITENYSAGMRFIREVDSASVMINASTRFADGFEYGLGAEIGISNDKLHARGPVGLEGLTSLKYVVFGHGEVRT</sequence>
<protein>
    <recommendedName>
        <fullName evidence="1">Gamma-glutamyl phosphate reductase</fullName>
        <shortName evidence="1">GPR</shortName>
        <ecNumber evidence="1">1.2.1.41</ecNumber>
    </recommendedName>
    <alternativeName>
        <fullName evidence="1">Glutamate-5-semialdehyde dehydrogenase</fullName>
    </alternativeName>
    <alternativeName>
        <fullName evidence="1">Glutamyl-gamma-semialdehyde dehydrogenase</fullName>
        <shortName evidence="1">GSA dehydrogenase</shortName>
    </alternativeName>
</protein>
<reference key="1">
    <citation type="journal article" date="2008" name="Genome Res.">
        <title>Genome sequence of the beta-rhizobium Cupriavidus taiwanensis and comparative genomics of rhizobia.</title>
        <authorList>
            <person name="Amadou C."/>
            <person name="Pascal G."/>
            <person name="Mangenot S."/>
            <person name="Glew M."/>
            <person name="Bontemps C."/>
            <person name="Capela D."/>
            <person name="Carrere S."/>
            <person name="Cruveiller S."/>
            <person name="Dossat C."/>
            <person name="Lajus A."/>
            <person name="Marchetti M."/>
            <person name="Poinsot V."/>
            <person name="Rouy Z."/>
            <person name="Servin B."/>
            <person name="Saad M."/>
            <person name="Schenowitz C."/>
            <person name="Barbe V."/>
            <person name="Batut J."/>
            <person name="Medigue C."/>
            <person name="Masson-Boivin C."/>
        </authorList>
    </citation>
    <scope>NUCLEOTIDE SEQUENCE [LARGE SCALE GENOMIC DNA]</scope>
    <source>
        <strain>DSM 17343 / BCRC 17206 / CCUG 44338 / CIP 107171 / LMG 19424 / R1</strain>
    </source>
</reference>
<evidence type="ECO:0000255" key="1">
    <source>
        <dbReference type="HAMAP-Rule" id="MF_00412"/>
    </source>
</evidence>
<feature type="chain" id="PRO_1000193591" description="Gamma-glutamyl phosphate reductase">
    <location>
        <begin position="1"/>
        <end position="426"/>
    </location>
</feature>
<comment type="function">
    <text evidence="1">Catalyzes the NADPH-dependent reduction of L-glutamate 5-phosphate into L-glutamate 5-semialdehyde and phosphate. The product spontaneously undergoes cyclization to form 1-pyrroline-5-carboxylate.</text>
</comment>
<comment type="catalytic activity">
    <reaction evidence="1">
        <text>L-glutamate 5-semialdehyde + phosphate + NADP(+) = L-glutamyl 5-phosphate + NADPH + H(+)</text>
        <dbReference type="Rhea" id="RHEA:19541"/>
        <dbReference type="ChEBI" id="CHEBI:15378"/>
        <dbReference type="ChEBI" id="CHEBI:43474"/>
        <dbReference type="ChEBI" id="CHEBI:57783"/>
        <dbReference type="ChEBI" id="CHEBI:58066"/>
        <dbReference type="ChEBI" id="CHEBI:58274"/>
        <dbReference type="ChEBI" id="CHEBI:58349"/>
        <dbReference type="EC" id="1.2.1.41"/>
    </reaction>
</comment>
<comment type="pathway">
    <text evidence="1">Amino-acid biosynthesis; L-proline biosynthesis; L-glutamate 5-semialdehyde from L-glutamate: step 2/2.</text>
</comment>
<comment type="subcellular location">
    <subcellularLocation>
        <location evidence="1">Cytoplasm</location>
    </subcellularLocation>
</comment>
<comment type="similarity">
    <text evidence="1">Belongs to the gamma-glutamyl phosphate reductase family.</text>
</comment>
<organism>
    <name type="scientific">Cupriavidus taiwanensis (strain DSM 17343 / BCRC 17206 / CCUG 44338 / CIP 107171 / LMG 19424 / R1)</name>
    <name type="common">Ralstonia taiwanensis (strain LMG 19424)</name>
    <dbReference type="NCBI Taxonomy" id="977880"/>
    <lineage>
        <taxon>Bacteria</taxon>
        <taxon>Pseudomonadati</taxon>
        <taxon>Pseudomonadota</taxon>
        <taxon>Betaproteobacteria</taxon>
        <taxon>Burkholderiales</taxon>
        <taxon>Burkholderiaceae</taxon>
        <taxon>Cupriavidus</taxon>
    </lineage>
</organism>
<dbReference type="EC" id="1.2.1.41" evidence="1"/>
<dbReference type="EMBL" id="CU633749">
    <property type="protein sequence ID" value="CAQ70543.1"/>
    <property type="molecule type" value="Genomic_DNA"/>
</dbReference>
<dbReference type="RefSeq" id="WP_012353839.1">
    <property type="nucleotide sequence ID" value="NC_010528.1"/>
</dbReference>
<dbReference type="SMR" id="B3R6R0"/>
<dbReference type="GeneID" id="29762489"/>
<dbReference type="KEGG" id="cti:RALTA_A2612"/>
<dbReference type="eggNOG" id="COG0014">
    <property type="taxonomic scope" value="Bacteria"/>
</dbReference>
<dbReference type="HOGENOM" id="CLU_030231_0_0_4"/>
<dbReference type="BioCyc" id="CTAI977880:RALTA_RS12705-MONOMER"/>
<dbReference type="UniPathway" id="UPA00098">
    <property type="reaction ID" value="UER00360"/>
</dbReference>
<dbReference type="Proteomes" id="UP000001692">
    <property type="component" value="Chromosome 1"/>
</dbReference>
<dbReference type="GO" id="GO:0005737">
    <property type="term" value="C:cytoplasm"/>
    <property type="evidence" value="ECO:0007669"/>
    <property type="project" value="UniProtKB-SubCell"/>
</dbReference>
<dbReference type="GO" id="GO:0004350">
    <property type="term" value="F:glutamate-5-semialdehyde dehydrogenase activity"/>
    <property type="evidence" value="ECO:0007669"/>
    <property type="project" value="UniProtKB-UniRule"/>
</dbReference>
<dbReference type="GO" id="GO:0050661">
    <property type="term" value="F:NADP binding"/>
    <property type="evidence" value="ECO:0007669"/>
    <property type="project" value="InterPro"/>
</dbReference>
<dbReference type="GO" id="GO:0055129">
    <property type="term" value="P:L-proline biosynthetic process"/>
    <property type="evidence" value="ECO:0007669"/>
    <property type="project" value="UniProtKB-UniRule"/>
</dbReference>
<dbReference type="CDD" id="cd07079">
    <property type="entry name" value="ALDH_F18-19_ProA-GPR"/>
    <property type="match status" value="1"/>
</dbReference>
<dbReference type="FunFam" id="3.40.309.10:FF:000006">
    <property type="entry name" value="Gamma-glutamyl phosphate reductase"/>
    <property type="match status" value="1"/>
</dbReference>
<dbReference type="Gene3D" id="3.40.605.10">
    <property type="entry name" value="Aldehyde Dehydrogenase, Chain A, domain 1"/>
    <property type="match status" value="1"/>
</dbReference>
<dbReference type="Gene3D" id="3.40.309.10">
    <property type="entry name" value="Aldehyde Dehydrogenase, Chain A, domain 2"/>
    <property type="match status" value="1"/>
</dbReference>
<dbReference type="HAMAP" id="MF_00412">
    <property type="entry name" value="ProA"/>
    <property type="match status" value="1"/>
</dbReference>
<dbReference type="InterPro" id="IPR016161">
    <property type="entry name" value="Ald_DH/histidinol_DH"/>
</dbReference>
<dbReference type="InterPro" id="IPR016163">
    <property type="entry name" value="Ald_DH_C"/>
</dbReference>
<dbReference type="InterPro" id="IPR016162">
    <property type="entry name" value="Ald_DH_N"/>
</dbReference>
<dbReference type="InterPro" id="IPR015590">
    <property type="entry name" value="Aldehyde_DH_dom"/>
</dbReference>
<dbReference type="InterPro" id="IPR020593">
    <property type="entry name" value="G-glutamylP_reductase_CS"/>
</dbReference>
<dbReference type="InterPro" id="IPR012134">
    <property type="entry name" value="Glu-5-SA_DH"/>
</dbReference>
<dbReference type="InterPro" id="IPR000965">
    <property type="entry name" value="GPR_dom"/>
</dbReference>
<dbReference type="NCBIfam" id="NF001221">
    <property type="entry name" value="PRK00197.1"/>
    <property type="match status" value="1"/>
</dbReference>
<dbReference type="NCBIfam" id="TIGR00407">
    <property type="entry name" value="proA"/>
    <property type="match status" value="1"/>
</dbReference>
<dbReference type="PANTHER" id="PTHR11063:SF8">
    <property type="entry name" value="DELTA-1-PYRROLINE-5-CARBOXYLATE SYNTHASE"/>
    <property type="match status" value="1"/>
</dbReference>
<dbReference type="PANTHER" id="PTHR11063">
    <property type="entry name" value="GLUTAMATE SEMIALDEHYDE DEHYDROGENASE"/>
    <property type="match status" value="1"/>
</dbReference>
<dbReference type="Pfam" id="PF00171">
    <property type="entry name" value="Aldedh"/>
    <property type="match status" value="2"/>
</dbReference>
<dbReference type="PIRSF" id="PIRSF000151">
    <property type="entry name" value="GPR"/>
    <property type="match status" value="1"/>
</dbReference>
<dbReference type="SUPFAM" id="SSF53720">
    <property type="entry name" value="ALDH-like"/>
    <property type="match status" value="1"/>
</dbReference>
<dbReference type="PROSITE" id="PS01223">
    <property type="entry name" value="PROA"/>
    <property type="match status" value="1"/>
</dbReference>
<keyword id="KW-0028">Amino-acid biosynthesis</keyword>
<keyword id="KW-0963">Cytoplasm</keyword>
<keyword id="KW-0521">NADP</keyword>
<keyword id="KW-0560">Oxidoreductase</keyword>
<keyword id="KW-0641">Proline biosynthesis</keyword>